<proteinExistence type="inferred from homology"/>
<accession>Q8EMB1</accession>
<comment type="function">
    <text evidence="1">Involved in unsaturated fatty acids biosynthesis. Catalyzes the dehydration of short chain beta-hydroxyacyl-ACPs and long chain saturated and unsaturated beta-hydroxyacyl-ACPs.</text>
</comment>
<comment type="catalytic activity">
    <reaction evidence="1">
        <text>a (3R)-hydroxyacyl-[ACP] = a (2E)-enoyl-[ACP] + H2O</text>
        <dbReference type="Rhea" id="RHEA:13097"/>
        <dbReference type="Rhea" id="RHEA-COMP:9925"/>
        <dbReference type="Rhea" id="RHEA-COMP:9945"/>
        <dbReference type="ChEBI" id="CHEBI:15377"/>
        <dbReference type="ChEBI" id="CHEBI:78784"/>
        <dbReference type="ChEBI" id="CHEBI:78827"/>
        <dbReference type="EC" id="4.2.1.59"/>
    </reaction>
</comment>
<comment type="subcellular location">
    <subcellularLocation>
        <location evidence="1">Cytoplasm</location>
    </subcellularLocation>
</comment>
<comment type="similarity">
    <text evidence="1">Belongs to the thioester dehydratase family. FabZ subfamily.</text>
</comment>
<reference key="1">
    <citation type="journal article" date="2002" name="Nucleic Acids Res.">
        <title>Genome sequence of Oceanobacillus iheyensis isolated from the Iheya Ridge and its unexpected adaptive capabilities to extreme environments.</title>
        <authorList>
            <person name="Takami H."/>
            <person name="Takaki Y."/>
            <person name="Uchiyama I."/>
        </authorList>
    </citation>
    <scope>NUCLEOTIDE SEQUENCE [LARGE SCALE GENOMIC DNA]</scope>
    <source>
        <strain>DSM 14371 / CIP 107618 / JCM 11309 / KCTC 3954 / HTE831</strain>
    </source>
</reference>
<keyword id="KW-0963">Cytoplasm</keyword>
<keyword id="KW-0441">Lipid A biosynthesis</keyword>
<keyword id="KW-0444">Lipid biosynthesis</keyword>
<keyword id="KW-0443">Lipid metabolism</keyword>
<keyword id="KW-0456">Lyase</keyword>
<keyword id="KW-1185">Reference proteome</keyword>
<gene>
    <name evidence="1" type="primary">fabZ</name>
    <name type="ordered locus">OB2946</name>
</gene>
<dbReference type="EC" id="4.2.1.59" evidence="1"/>
<dbReference type="EMBL" id="BA000028">
    <property type="protein sequence ID" value="BAC14902.1"/>
    <property type="molecule type" value="Genomic_DNA"/>
</dbReference>
<dbReference type="RefSeq" id="WP_011067343.1">
    <property type="nucleotide sequence ID" value="NC_004193.1"/>
</dbReference>
<dbReference type="SMR" id="Q8EMB1"/>
<dbReference type="STRING" id="221109.gene:10735198"/>
<dbReference type="KEGG" id="oih:OB2946"/>
<dbReference type="eggNOG" id="COG0764">
    <property type="taxonomic scope" value="Bacteria"/>
</dbReference>
<dbReference type="HOGENOM" id="CLU_078912_3_0_9"/>
<dbReference type="OrthoDB" id="9772788at2"/>
<dbReference type="PhylomeDB" id="Q8EMB1"/>
<dbReference type="Proteomes" id="UP000000822">
    <property type="component" value="Chromosome"/>
</dbReference>
<dbReference type="GO" id="GO:0005737">
    <property type="term" value="C:cytoplasm"/>
    <property type="evidence" value="ECO:0007669"/>
    <property type="project" value="UniProtKB-SubCell"/>
</dbReference>
<dbReference type="GO" id="GO:0016020">
    <property type="term" value="C:membrane"/>
    <property type="evidence" value="ECO:0007669"/>
    <property type="project" value="GOC"/>
</dbReference>
<dbReference type="GO" id="GO:0019171">
    <property type="term" value="F:(3R)-hydroxyacyl-[acyl-carrier-protein] dehydratase activity"/>
    <property type="evidence" value="ECO:0007669"/>
    <property type="project" value="UniProtKB-EC"/>
</dbReference>
<dbReference type="GO" id="GO:0006633">
    <property type="term" value="P:fatty acid biosynthetic process"/>
    <property type="evidence" value="ECO:0007669"/>
    <property type="project" value="UniProtKB-UniRule"/>
</dbReference>
<dbReference type="GO" id="GO:0009245">
    <property type="term" value="P:lipid A biosynthetic process"/>
    <property type="evidence" value="ECO:0007669"/>
    <property type="project" value="UniProtKB-UniRule"/>
</dbReference>
<dbReference type="CDD" id="cd01288">
    <property type="entry name" value="FabZ"/>
    <property type="match status" value="1"/>
</dbReference>
<dbReference type="FunFam" id="3.10.129.10:FF:000001">
    <property type="entry name" value="3-hydroxyacyl-[acyl-carrier-protein] dehydratase FabZ"/>
    <property type="match status" value="1"/>
</dbReference>
<dbReference type="Gene3D" id="3.10.129.10">
    <property type="entry name" value="Hotdog Thioesterase"/>
    <property type="match status" value="1"/>
</dbReference>
<dbReference type="HAMAP" id="MF_00406">
    <property type="entry name" value="FabZ"/>
    <property type="match status" value="1"/>
</dbReference>
<dbReference type="InterPro" id="IPR013114">
    <property type="entry name" value="FabA_FabZ"/>
</dbReference>
<dbReference type="InterPro" id="IPR010084">
    <property type="entry name" value="FabZ"/>
</dbReference>
<dbReference type="InterPro" id="IPR029069">
    <property type="entry name" value="HotDog_dom_sf"/>
</dbReference>
<dbReference type="NCBIfam" id="TIGR01750">
    <property type="entry name" value="fabZ"/>
    <property type="match status" value="1"/>
</dbReference>
<dbReference type="NCBIfam" id="NF000582">
    <property type="entry name" value="PRK00006.1"/>
    <property type="match status" value="1"/>
</dbReference>
<dbReference type="PANTHER" id="PTHR30272">
    <property type="entry name" value="3-HYDROXYACYL-[ACYL-CARRIER-PROTEIN] DEHYDRATASE"/>
    <property type="match status" value="1"/>
</dbReference>
<dbReference type="PANTHER" id="PTHR30272:SF1">
    <property type="entry name" value="3-HYDROXYACYL-[ACYL-CARRIER-PROTEIN] DEHYDRATASE"/>
    <property type="match status" value="1"/>
</dbReference>
<dbReference type="Pfam" id="PF07977">
    <property type="entry name" value="FabA"/>
    <property type="match status" value="1"/>
</dbReference>
<dbReference type="SUPFAM" id="SSF54637">
    <property type="entry name" value="Thioesterase/thiol ester dehydrase-isomerase"/>
    <property type="match status" value="1"/>
</dbReference>
<feature type="chain" id="PRO_0000091705" description="3-hydroxyacyl-[acyl-carrier-protein] dehydratase FabZ">
    <location>
        <begin position="1"/>
        <end position="140"/>
    </location>
</feature>
<feature type="active site" evidence="1">
    <location>
        <position position="48"/>
    </location>
</feature>
<sequence length="140" mass="15431">MMDVEQVKEIIPHRYPFLLVDKVVEIQEGEKVTALKNVSVNEPFFQGHFPEYPVMPGVLILEALAQTGAIAVLNIEENKGKIGFLAGVDKCRFKRQVKPGDQLNLQVEIIRMKGPIGKGKGIATVDGEVACEAEITFAIK</sequence>
<organism>
    <name type="scientific">Oceanobacillus iheyensis (strain DSM 14371 / CIP 107618 / JCM 11309 / KCTC 3954 / HTE831)</name>
    <dbReference type="NCBI Taxonomy" id="221109"/>
    <lineage>
        <taxon>Bacteria</taxon>
        <taxon>Bacillati</taxon>
        <taxon>Bacillota</taxon>
        <taxon>Bacilli</taxon>
        <taxon>Bacillales</taxon>
        <taxon>Bacillaceae</taxon>
        <taxon>Oceanobacillus</taxon>
    </lineage>
</organism>
<name>FABZ_OCEIH</name>
<protein>
    <recommendedName>
        <fullName evidence="1">3-hydroxyacyl-[acyl-carrier-protein] dehydratase FabZ</fullName>
        <ecNumber evidence="1">4.2.1.59</ecNumber>
    </recommendedName>
    <alternativeName>
        <fullName evidence="1">(3R)-hydroxymyristoyl-[acyl-carrier-protein] dehydratase</fullName>
        <shortName evidence="1">(3R)-hydroxymyristoyl-ACP dehydrase</shortName>
    </alternativeName>
    <alternativeName>
        <fullName evidence="1">Beta-hydroxyacyl-ACP dehydratase</fullName>
    </alternativeName>
</protein>
<evidence type="ECO:0000255" key="1">
    <source>
        <dbReference type="HAMAP-Rule" id="MF_00406"/>
    </source>
</evidence>